<keyword id="KW-0687">Ribonucleoprotein</keyword>
<keyword id="KW-0689">Ribosomal protein</keyword>
<keyword id="KW-0694">RNA-binding</keyword>
<keyword id="KW-0699">rRNA-binding</keyword>
<protein>
    <recommendedName>
        <fullName evidence="1">Small ribosomal subunit protein uS15</fullName>
    </recommendedName>
    <alternativeName>
        <fullName evidence="2">30S ribosomal protein S15</fullName>
    </alternativeName>
</protein>
<reference key="1">
    <citation type="submission" date="2007-07" db="EMBL/GenBank/DDBJ databases">
        <title>Complete genome sequence of Campylobacter jejuni subsp doylei 269.97 isolated from human blood.</title>
        <authorList>
            <person name="Fouts D.E."/>
            <person name="Mongodin E.F."/>
            <person name="Puiu D."/>
            <person name="Sebastian Y."/>
            <person name="Miller W.G."/>
            <person name="Mandrell R.E."/>
            <person name="Lastovica A.J."/>
            <person name="Nelson K.E."/>
        </authorList>
    </citation>
    <scope>NUCLEOTIDE SEQUENCE [LARGE SCALE GENOMIC DNA]</scope>
    <source>
        <strain>ATCC BAA-1458 / RM4099 / 269.97</strain>
    </source>
</reference>
<feature type="chain" id="PRO_1000054771" description="Small ribosomal subunit protein uS15">
    <location>
        <begin position="1"/>
        <end position="90"/>
    </location>
</feature>
<evidence type="ECO:0000255" key="1">
    <source>
        <dbReference type="HAMAP-Rule" id="MF_01343"/>
    </source>
</evidence>
<evidence type="ECO:0000305" key="2"/>
<comment type="function">
    <text evidence="1">One of the primary rRNA binding proteins, it binds directly to 16S rRNA where it helps nucleate assembly of the platform of the 30S subunit by binding and bridging several RNA helices of the 16S rRNA.</text>
</comment>
<comment type="function">
    <text evidence="1">Forms an intersubunit bridge (bridge B4) with the 23S rRNA of the 50S subunit in the ribosome.</text>
</comment>
<comment type="subunit">
    <text evidence="1">Part of the 30S ribosomal subunit. Forms a bridge to the 50S subunit in the 70S ribosome, contacting the 23S rRNA.</text>
</comment>
<comment type="similarity">
    <text evidence="1">Belongs to the universal ribosomal protein uS15 family.</text>
</comment>
<gene>
    <name evidence="1" type="primary">rpsO</name>
    <name type="ordered locus">JJD26997_1029</name>
</gene>
<accession>A7H3P9</accession>
<name>RS15_CAMJD</name>
<proteinExistence type="inferred from homology"/>
<dbReference type="EMBL" id="CP000768">
    <property type="protein sequence ID" value="ABS43956.1"/>
    <property type="molecule type" value="Genomic_DNA"/>
</dbReference>
<dbReference type="SMR" id="A7H3P9"/>
<dbReference type="KEGG" id="cjd:JJD26997_1029"/>
<dbReference type="HOGENOM" id="CLU_148518_0_0_7"/>
<dbReference type="Proteomes" id="UP000002302">
    <property type="component" value="Chromosome"/>
</dbReference>
<dbReference type="GO" id="GO:0022627">
    <property type="term" value="C:cytosolic small ribosomal subunit"/>
    <property type="evidence" value="ECO:0007669"/>
    <property type="project" value="TreeGrafter"/>
</dbReference>
<dbReference type="GO" id="GO:0019843">
    <property type="term" value="F:rRNA binding"/>
    <property type="evidence" value="ECO:0007669"/>
    <property type="project" value="UniProtKB-UniRule"/>
</dbReference>
<dbReference type="GO" id="GO:0003735">
    <property type="term" value="F:structural constituent of ribosome"/>
    <property type="evidence" value="ECO:0007669"/>
    <property type="project" value="InterPro"/>
</dbReference>
<dbReference type="GO" id="GO:0006412">
    <property type="term" value="P:translation"/>
    <property type="evidence" value="ECO:0007669"/>
    <property type="project" value="UniProtKB-UniRule"/>
</dbReference>
<dbReference type="CDD" id="cd00353">
    <property type="entry name" value="Ribosomal_S15p_S13e"/>
    <property type="match status" value="1"/>
</dbReference>
<dbReference type="FunFam" id="1.10.287.10:FF:000002">
    <property type="entry name" value="30S ribosomal protein S15"/>
    <property type="match status" value="1"/>
</dbReference>
<dbReference type="Gene3D" id="6.10.250.3130">
    <property type="match status" value="1"/>
</dbReference>
<dbReference type="Gene3D" id="1.10.287.10">
    <property type="entry name" value="S15/NS1, RNA-binding"/>
    <property type="match status" value="1"/>
</dbReference>
<dbReference type="HAMAP" id="MF_01343_B">
    <property type="entry name" value="Ribosomal_uS15_B"/>
    <property type="match status" value="1"/>
</dbReference>
<dbReference type="InterPro" id="IPR000589">
    <property type="entry name" value="Ribosomal_uS15"/>
</dbReference>
<dbReference type="InterPro" id="IPR005290">
    <property type="entry name" value="Ribosomal_uS15_bac-type"/>
</dbReference>
<dbReference type="InterPro" id="IPR009068">
    <property type="entry name" value="uS15_NS1_RNA-bd_sf"/>
</dbReference>
<dbReference type="NCBIfam" id="TIGR00952">
    <property type="entry name" value="S15_bact"/>
    <property type="match status" value="1"/>
</dbReference>
<dbReference type="PANTHER" id="PTHR23321">
    <property type="entry name" value="RIBOSOMAL PROTEIN S15, BACTERIAL AND ORGANELLAR"/>
    <property type="match status" value="1"/>
</dbReference>
<dbReference type="PANTHER" id="PTHR23321:SF26">
    <property type="entry name" value="SMALL RIBOSOMAL SUBUNIT PROTEIN US15M"/>
    <property type="match status" value="1"/>
</dbReference>
<dbReference type="Pfam" id="PF00312">
    <property type="entry name" value="Ribosomal_S15"/>
    <property type="match status" value="1"/>
</dbReference>
<dbReference type="SMART" id="SM01387">
    <property type="entry name" value="Ribosomal_S15"/>
    <property type="match status" value="1"/>
</dbReference>
<dbReference type="SUPFAM" id="SSF47060">
    <property type="entry name" value="S15/NS1 RNA-binding domain"/>
    <property type="match status" value="1"/>
</dbReference>
<dbReference type="PROSITE" id="PS00362">
    <property type="entry name" value="RIBOSOMAL_S15"/>
    <property type="match status" value="1"/>
</dbReference>
<sequence length="90" mass="10268">MALDSAKKAEIVAKFAKKPGDTGSTEVQVALLTARIIELTEHLKIYKKDFSSRLGLLKLVGQRKRLLSYLKRKDYNSYSKLITELNLRDK</sequence>
<organism>
    <name type="scientific">Campylobacter jejuni subsp. doylei (strain ATCC BAA-1458 / RM4099 / 269.97)</name>
    <dbReference type="NCBI Taxonomy" id="360109"/>
    <lineage>
        <taxon>Bacteria</taxon>
        <taxon>Pseudomonadati</taxon>
        <taxon>Campylobacterota</taxon>
        <taxon>Epsilonproteobacteria</taxon>
        <taxon>Campylobacterales</taxon>
        <taxon>Campylobacteraceae</taxon>
        <taxon>Campylobacter</taxon>
    </lineage>
</organism>